<gene>
    <name evidence="1" type="primary">ispH</name>
    <name type="ordered locus">YpsIP31758_3457</name>
</gene>
<sequence>MQILLANPRGFCAGVDRAISIVERAIEMYGAPIYVRHEVVHNRYVVESLCERGAIFIEEISEVPDGSILIFSAHGVSQAVRAEARSRNLTMLFDATCPLVTKVHMEVARASRKGKEAILIGHAGHPEVEGTMGQYSNPNGGMYLVESPDDVWQLSVKDENNLCFMTQTTLSVDDTSAVIDALNTRFPKIVGPRKDDICYATTNRQEAVRNLANDADIVLVVGSKNSSNSNRLAELVQRMGKPAYLIDSAADIQEFWLQGAKCIGVTAGASAPDILVQQVIARLKDLGAGESIELSGREENIVFEVPKELRVEVKQID</sequence>
<organism>
    <name type="scientific">Yersinia pseudotuberculosis serotype O:1b (strain IP 31758)</name>
    <dbReference type="NCBI Taxonomy" id="349747"/>
    <lineage>
        <taxon>Bacteria</taxon>
        <taxon>Pseudomonadati</taxon>
        <taxon>Pseudomonadota</taxon>
        <taxon>Gammaproteobacteria</taxon>
        <taxon>Enterobacterales</taxon>
        <taxon>Yersiniaceae</taxon>
        <taxon>Yersinia</taxon>
    </lineage>
</organism>
<accession>A7FMD4</accession>
<comment type="function">
    <text evidence="1">Catalyzes the conversion of 1-hydroxy-2-methyl-2-(E)-butenyl 4-diphosphate (HMBPP) into a mixture of isopentenyl diphosphate (IPP) and dimethylallyl diphosphate (DMAPP). Acts in the terminal step of the DOXP/MEP pathway for isoprenoid precursor biosynthesis.</text>
</comment>
<comment type="catalytic activity">
    <reaction evidence="1">
        <text>isopentenyl diphosphate + 2 oxidized [2Fe-2S]-[ferredoxin] + H2O = (2E)-4-hydroxy-3-methylbut-2-enyl diphosphate + 2 reduced [2Fe-2S]-[ferredoxin] + 2 H(+)</text>
        <dbReference type="Rhea" id="RHEA:24488"/>
        <dbReference type="Rhea" id="RHEA-COMP:10000"/>
        <dbReference type="Rhea" id="RHEA-COMP:10001"/>
        <dbReference type="ChEBI" id="CHEBI:15377"/>
        <dbReference type="ChEBI" id="CHEBI:15378"/>
        <dbReference type="ChEBI" id="CHEBI:33737"/>
        <dbReference type="ChEBI" id="CHEBI:33738"/>
        <dbReference type="ChEBI" id="CHEBI:128753"/>
        <dbReference type="ChEBI" id="CHEBI:128769"/>
        <dbReference type="EC" id="1.17.7.4"/>
    </reaction>
</comment>
<comment type="catalytic activity">
    <reaction evidence="1">
        <text>dimethylallyl diphosphate + 2 oxidized [2Fe-2S]-[ferredoxin] + H2O = (2E)-4-hydroxy-3-methylbut-2-enyl diphosphate + 2 reduced [2Fe-2S]-[ferredoxin] + 2 H(+)</text>
        <dbReference type="Rhea" id="RHEA:24825"/>
        <dbReference type="Rhea" id="RHEA-COMP:10000"/>
        <dbReference type="Rhea" id="RHEA-COMP:10001"/>
        <dbReference type="ChEBI" id="CHEBI:15377"/>
        <dbReference type="ChEBI" id="CHEBI:15378"/>
        <dbReference type="ChEBI" id="CHEBI:33737"/>
        <dbReference type="ChEBI" id="CHEBI:33738"/>
        <dbReference type="ChEBI" id="CHEBI:57623"/>
        <dbReference type="ChEBI" id="CHEBI:128753"/>
        <dbReference type="EC" id="1.17.7.4"/>
    </reaction>
</comment>
<comment type="cofactor">
    <cofactor evidence="1">
        <name>[4Fe-4S] cluster</name>
        <dbReference type="ChEBI" id="CHEBI:49883"/>
    </cofactor>
    <text evidence="1">Binds 1 [4Fe-4S] cluster per subunit.</text>
</comment>
<comment type="pathway">
    <text evidence="1">Isoprenoid biosynthesis; dimethylallyl diphosphate biosynthesis; dimethylallyl diphosphate from (2E)-4-hydroxy-3-methylbutenyl diphosphate: step 1/1.</text>
</comment>
<comment type="pathway">
    <text evidence="1">Isoprenoid biosynthesis; isopentenyl diphosphate biosynthesis via DXP pathway; isopentenyl diphosphate from 1-deoxy-D-xylulose 5-phosphate: step 6/6.</text>
</comment>
<comment type="subunit">
    <text evidence="1">Homodimer.</text>
</comment>
<comment type="similarity">
    <text evidence="1">Belongs to the IspH family.</text>
</comment>
<name>ISPH_YERP3</name>
<reference key="1">
    <citation type="journal article" date="2007" name="PLoS Genet.">
        <title>The complete genome sequence of Yersinia pseudotuberculosis IP31758, the causative agent of Far East scarlet-like fever.</title>
        <authorList>
            <person name="Eppinger M."/>
            <person name="Rosovitz M.J."/>
            <person name="Fricke W.F."/>
            <person name="Rasko D.A."/>
            <person name="Kokorina G."/>
            <person name="Fayolle C."/>
            <person name="Lindler L.E."/>
            <person name="Carniel E."/>
            <person name="Ravel J."/>
        </authorList>
    </citation>
    <scope>NUCLEOTIDE SEQUENCE [LARGE SCALE GENOMIC DNA]</scope>
    <source>
        <strain>IP 31758</strain>
    </source>
</reference>
<dbReference type="EC" id="1.17.7.4" evidence="1"/>
<dbReference type="EMBL" id="CP000720">
    <property type="protein sequence ID" value="ABS49386.1"/>
    <property type="molecule type" value="Genomic_DNA"/>
</dbReference>
<dbReference type="RefSeq" id="WP_012105692.1">
    <property type="nucleotide sequence ID" value="NC_009708.1"/>
</dbReference>
<dbReference type="SMR" id="A7FMD4"/>
<dbReference type="KEGG" id="ypi:YpsIP31758_3457"/>
<dbReference type="HOGENOM" id="CLU_027486_1_0_6"/>
<dbReference type="UniPathway" id="UPA00056">
    <property type="reaction ID" value="UER00097"/>
</dbReference>
<dbReference type="UniPathway" id="UPA00059">
    <property type="reaction ID" value="UER00105"/>
</dbReference>
<dbReference type="Proteomes" id="UP000002412">
    <property type="component" value="Chromosome"/>
</dbReference>
<dbReference type="GO" id="GO:0051539">
    <property type="term" value="F:4 iron, 4 sulfur cluster binding"/>
    <property type="evidence" value="ECO:0007669"/>
    <property type="project" value="UniProtKB-UniRule"/>
</dbReference>
<dbReference type="GO" id="GO:0051745">
    <property type="term" value="F:4-hydroxy-3-methylbut-2-enyl diphosphate reductase activity"/>
    <property type="evidence" value="ECO:0007669"/>
    <property type="project" value="UniProtKB-UniRule"/>
</dbReference>
<dbReference type="GO" id="GO:0046872">
    <property type="term" value="F:metal ion binding"/>
    <property type="evidence" value="ECO:0007669"/>
    <property type="project" value="UniProtKB-KW"/>
</dbReference>
<dbReference type="GO" id="GO:0050992">
    <property type="term" value="P:dimethylallyl diphosphate biosynthetic process"/>
    <property type="evidence" value="ECO:0007669"/>
    <property type="project" value="UniProtKB-UniRule"/>
</dbReference>
<dbReference type="GO" id="GO:0019288">
    <property type="term" value="P:isopentenyl diphosphate biosynthetic process, methylerythritol 4-phosphate pathway"/>
    <property type="evidence" value="ECO:0007669"/>
    <property type="project" value="UniProtKB-UniRule"/>
</dbReference>
<dbReference type="GO" id="GO:0016114">
    <property type="term" value="P:terpenoid biosynthetic process"/>
    <property type="evidence" value="ECO:0007669"/>
    <property type="project" value="UniProtKB-UniRule"/>
</dbReference>
<dbReference type="CDD" id="cd13944">
    <property type="entry name" value="lytB_ispH"/>
    <property type="match status" value="1"/>
</dbReference>
<dbReference type="FunFam" id="3.40.50.11270:FF:000001">
    <property type="entry name" value="4-hydroxy-3-methylbut-2-enyl diphosphate reductase"/>
    <property type="match status" value="1"/>
</dbReference>
<dbReference type="Gene3D" id="3.40.50.11270">
    <property type="match status" value="1"/>
</dbReference>
<dbReference type="Gene3D" id="3.40.1010.20">
    <property type="entry name" value="4-hydroxy-3-methylbut-2-enyl diphosphate reductase, catalytic domain"/>
    <property type="match status" value="2"/>
</dbReference>
<dbReference type="HAMAP" id="MF_00191">
    <property type="entry name" value="IspH"/>
    <property type="match status" value="1"/>
</dbReference>
<dbReference type="InterPro" id="IPR003451">
    <property type="entry name" value="LytB/IspH"/>
</dbReference>
<dbReference type="NCBIfam" id="TIGR00216">
    <property type="entry name" value="ispH_lytB"/>
    <property type="match status" value="1"/>
</dbReference>
<dbReference type="NCBIfam" id="NF002188">
    <property type="entry name" value="PRK01045.1-2"/>
    <property type="match status" value="1"/>
</dbReference>
<dbReference type="NCBIfam" id="NF002190">
    <property type="entry name" value="PRK01045.1-4"/>
    <property type="match status" value="1"/>
</dbReference>
<dbReference type="PANTHER" id="PTHR30426">
    <property type="entry name" value="4-HYDROXY-3-METHYLBUT-2-ENYL DIPHOSPHATE REDUCTASE"/>
    <property type="match status" value="1"/>
</dbReference>
<dbReference type="PANTHER" id="PTHR30426:SF0">
    <property type="entry name" value="4-HYDROXY-3-METHYLBUT-2-ENYL DIPHOSPHATE REDUCTASE"/>
    <property type="match status" value="1"/>
</dbReference>
<dbReference type="Pfam" id="PF02401">
    <property type="entry name" value="LYTB"/>
    <property type="match status" value="1"/>
</dbReference>
<protein>
    <recommendedName>
        <fullName evidence="1">4-hydroxy-3-methylbut-2-enyl diphosphate reductase</fullName>
        <shortName evidence="1">HMBPP reductase</shortName>
        <ecNumber evidence="1">1.17.7.4</ecNumber>
    </recommendedName>
</protein>
<proteinExistence type="inferred from homology"/>
<evidence type="ECO:0000255" key="1">
    <source>
        <dbReference type="HAMAP-Rule" id="MF_00191"/>
    </source>
</evidence>
<keyword id="KW-0004">4Fe-4S</keyword>
<keyword id="KW-0408">Iron</keyword>
<keyword id="KW-0411">Iron-sulfur</keyword>
<keyword id="KW-0414">Isoprene biosynthesis</keyword>
<keyword id="KW-0479">Metal-binding</keyword>
<keyword id="KW-0560">Oxidoreductase</keyword>
<feature type="chain" id="PRO_1000058512" description="4-hydroxy-3-methylbut-2-enyl diphosphate reductase">
    <location>
        <begin position="1"/>
        <end position="317"/>
    </location>
</feature>
<feature type="active site" description="Proton donor" evidence="1">
    <location>
        <position position="127"/>
    </location>
</feature>
<feature type="binding site" evidence="1">
    <location>
        <position position="12"/>
    </location>
    <ligand>
        <name>[4Fe-4S] cluster</name>
        <dbReference type="ChEBI" id="CHEBI:49883"/>
    </ligand>
</feature>
<feature type="binding site" evidence="1">
    <location>
        <position position="41"/>
    </location>
    <ligand>
        <name>(2E)-4-hydroxy-3-methylbut-2-enyl diphosphate</name>
        <dbReference type="ChEBI" id="CHEBI:128753"/>
    </ligand>
</feature>
<feature type="binding site" evidence="1">
    <location>
        <position position="41"/>
    </location>
    <ligand>
        <name>dimethylallyl diphosphate</name>
        <dbReference type="ChEBI" id="CHEBI:57623"/>
    </ligand>
</feature>
<feature type="binding site" evidence="1">
    <location>
        <position position="41"/>
    </location>
    <ligand>
        <name>isopentenyl diphosphate</name>
        <dbReference type="ChEBI" id="CHEBI:128769"/>
    </ligand>
</feature>
<feature type="binding site" evidence="1">
    <location>
        <position position="74"/>
    </location>
    <ligand>
        <name>(2E)-4-hydroxy-3-methylbut-2-enyl diphosphate</name>
        <dbReference type="ChEBI" id="CHEBI:128753"/>
    </ligand>
</feature>
<feature type="binding site" evidence="1">
    <location>
        <position position="74"/>
    </location>
    <ligand>
        <name>dimethylallyl diphosphate</name>
        <dbReference type="ChEBI" id="CHEBI:57623"/>
    </ligand>
</feature>
<feature type="binding site" evidence="1">
    <location>
        <position position="74"/>
    </location>
    <ligand>
        <name>isopentenyl diphosphate</name>
        <dbReference type="ChEBI" id="CHEBI:128769"/>
    </ligand>
</feature>
<feature type="binding site" evidence="1">
    <location>
        <position position="97"/>
    </location>
    <ligand>
        <name>[4Fe-4S] cluster</name>
        <dbReference type="ChEBI" id="CHEBI:49883"/>
    </ligand>
</feature>
<feature type="binding site" evidence="1">
    <location>
        <position position="125"/>
    </location>
    <ligand>
        <name>(2E)-4-hydroxy-3-methylbut-2-enyl diphosphate</name>
        <dbReference type="ChEBI" id="CHEBI:128753"/>
    </ligand>
</feature>
<feature type="binding site" evidence="1">
    <location>
        <position position="125"/>
    </location>
    <ligand>
        <name>dimethylallyl diphosphate</name>
        <dbReference type="ChEBI" id="CHEBI:57623"/>
    </ligand>
</feature>
<feature type="binding site" evidence="1">
    <location>
        <position position="125"/>
    </location>
    <ligand>
        <name>isopentenyl diphosphate</name>
        <dbReference type="ChEBI" id="CHEBI:128769"/>
    </ligand>
</feature>
<feature type="binding site" evidence="1">
    <location>
        <position position="168"/>
    </location>
    <ligand>
        <name>(2E)-4-hydroxy-3-methylbut-2-enyl diphosphate</name>
        <dbReference type="ChEBI" id="CHEBI:128753"/>
    </ligand>
</feature>
<feature type="binding site" evidence="1">
    <location>
        <position position="198"/>
    </location>
    <ligand>
        <name>[4Fe-4S] cluster</name>
        <dbReference type="ChEBI" id="CHEBI:49883"/>
    </ligand>
</feature>
<feature type="binding site" evidence="1">
    <location>
        <position position="226"/>
    </location>
    <ligand>
        <name>(2E)-4-hydroxy-3-methylbut-2-enyl diphosphate</name>
        <dbReference type="ChEBI" id="CHEBI:128753"/>
    </ligand>
</feature>
<feature type="binding site" evidence="1">
    <location>
        <position position="226"/>
    </location>
    <ligand>
        <name>dimethylallyl diphosphate</name>
        <dbReference type="ChEBI" id="CHEBI:57623"/>
    </ligand>
</feature>
<feature type="binding site" evidence="1">
    <location>
        <position position="226"/>
    </location>
    <ligand>
        <name>isopentenyl diphosphate</name>
        <dbReference type="ChEBI" id="CHEBI:128769"/>
    </ligand>
</feature>
<feature type="binding site" evidence="1">
    <location>
        <position position="227"/>
    </location>
    <ligand>
        <name>(2E)-4-hydroxy-3-methylbut-2-enyl diphosphate</name>
        <dbReference type="ChEBI" id="CHEBI:128753"/>
    </ligand>
</feature>
<feature type="binding site" evidence="1">
    <location>
        <position position="227"/>
    </location>
    <ligand>
        <name>dimethylallyl diphosphate</name>
        <dbReference type="ChEBI" id="CHEBI:57623"/>
    </ligand>
</feature>
<feature type="binding site" evidence="1">
    <location>
        <position position="227"/>
    </location>
    <ligand>
        <name>isopentenyl diphosphate</name>
        <dbReference type="ChEBI" id="CHEBI:128769"/>
    </ligand>
</feature>
<feature type="binding site" evidence="1">
    <location>
        <position position="228"/>
    </location>
    <ligand>
        <name>(2E)-4-hydroxy-3-methylbut-2-enyl diphosphate</name>
        <dbReference type="ChEBI" id="CHEBI:128753"/>
    </ligand>
</feature>
<feature type="binding site" evidence="1">
    <location>
        <position position="228"/>
    </location>
    <ligand>
        <name>dimethylallyl diphosphate</name>
        <dbReference type="ChEBI" id="CHEBI:57623"/>
    </ligand>
</feature>
<feature type="binding site" evidence="1">
    <location>
        <position position="228"/>
    </location>
    <ligand>
        <name>isopentenyl diphosphate</name>
        <dbReference type="ChEBI" id="CHEBI:128769"/>
    </ligand>
</feature>
<feature type="binding site" evidence="1">
    <location>
        <position position="270"/>
    </location>
    <ligand>
        <name>(2E)-4-hydroxy-3-methylbut-2-enyl diphosphate</name>
        <dbReference type="ChEBI" id="CHEBI:128753"/>
    </ligand>
</feature>
<feature type="binding site" evidence="1">
    <location>
        <position position="270"/>
    </location>
    <ligand>
        <name>dimethylallyl diphosphate</name>
        <dbReference type="ChEBI" id="CHEBI:57623"/>
    </ligand>
</feature>
<feature type="binding site" evidence="1">
    <location>
        <position position="270"/>
    </location>
    <ligand>
        <name>isopentenyl diphosphate</name>
        <dbReference type="ChEBI" id="CHEBI:128769"/>
    </ligand>
</feature>